<protein>
    <recommendedName>
        <fullName evidence="1">Holo-[acyl-carrier-protein] synthase</fullName>
        <shortName evidence="1">Holo-ACP synthase</shortName>
        <ecNumber evidence="1">2.7.8.7</ecNumber>
    </recommendedName>
    <alternativeName>
        <fullName evidence="1">4'-phosphopantetheinyl transferase AcpS</fullName>
    </alternativeName>
</protein>
<gene>
    <name evidence="1" type="primary">acpS</name>
    <name type="ordered locus">KRH_06530</name>
</gene>
<reference key="1">
    <citation type="journal article" date="2008" name="J. Bacteriol.">
        <title>Complete genome sequence of the soil actinomycete Kocuria rhizophila.</title>
        <authorList>
            <person name="Takarada H."/>
            <person name="Sekine M."/>
            <person name="Kosugi H."/>
            <person name="Matsuo Y."/>
            <person name="Fujisawa T."/>
            <person name="Omata S."/>
            <person name="Kishi E."/>
            <person name="Shimizu A."/>
            <person name="Tsukatani N."/>
            <person name="Tanikawa S."/>
            <person name="Fujita N."/>
            <person name="Harayama S."/>
        </authorList>
    </citation>
    <scope>NUCLEOTIDE SEQUENCE [LARGE SCALE GENOMIC DNA]</scope>
    <source>
        <strain>ATCC 9341 / DSM 348 / NBRC 103217 / DC2201</strain>
    </source>
</reference>
<sequence length="123" mass="13616">MIVGTGVDIVDIARFERQLERTPRLRERLFVPHERELAPRSLAARFAVKEAAAKALLAPPGMIWQDCWVSNDEHGAPHLHTTGTVARQQRARGVDTWHVSISHDGGMAVAFVVAEAQEGSRDD</sequence>
<dbReference type="EC" id="2.7.8.7" evidence="1"/>
<dbReference type="EMBL" id="AP009152">
    <property type="protein sequence ID" value="BAG29000.1"/>
    <property type="molecule type" value="Genomic_DNA"/>
</dbReference>
<dbReference type="RefSeq" id="WP_012397725.1">
    <property type="nucleotide sequence ID" value="NZ_VECX01000001.1"/>
</dbReference>
<dbReference type="SMR" id="B2GJ30"/>
<dbReference type="STRING" id="378753.KRH_06530"/>
<dbReference type="KEGG" id="krh:KRH_06530"/>
<dbReference type="eggNOG" id="COG0736">
    <property type="taxonomic scope" value="Bacteria"/>
</dbReference>
<dbReference type="HOGENOM" id="CLU_089696_0_0_11"/>
<dbReference type="OrthoDB" id="517356at2"/>
<dbReference type="Proteomes" id="UP000008838">
    <property type="component" value="Chromosome"/>
</dbReference>
<dbReference type="GO" id="GO:0005737">
    <property type="term" value="C:cytoplasm"/>
    <property type="evidence" value="ECO:0007669"/>
    <property type="project" value="UniProtKB-SubCell"/>
</dbReference>
<dbReference type="GO" id="GO:0008897">
    <property type="term" value="F:holo-[acyl-carrier-protein] synthase activity"/>
    <property type="evidence" value="ECO:0007669"/>
    <property type="project" value="UniProtKB-UniRule"/>
</dbReference>
<dbReference type="GO" id="GO:0000287">
    <property type="term" value="F:magnesium ion binding"/>
    <property type="evidence" value="ECO:0007669"/>
    <property type="project" value="UniProtKB-UniRule"/>
</dbReference>
<dbReference type="GO" id="GO:0006633">
    <property type="term" value="P:fatty acid biosynthetic process"/>
    <property type="evidence" value="ECO:0007669"/>
    <property type="project" value="UniProtKB-UniRule"/>
</dbReference>
<dbReference type="Gene3D" id="3.90.470.20">
    <property type="entry name" value="4'-phosphopantetheinyl transferase domain"/>
    <property type="match status" value="1"/>
</dbReference>
<dbReference type="HAMAP" id="MF_00101">
    <property type="entry name" value="AcpS"/>
    <property type="match status" value="1"/>
</dbReference>
<dbReference type="InterPro" id="IPR008278">
    <property type="entry name" value="4-PPantetheinyl_Trfase_dom"/>
</dbReference>
<dbReference type="InterPro" id="IPR037143">
    <property type="entry name" value="4-PPantetheinyl_Trfase_dom_sf"/>
</dbReference>
<dbReference type="InterPro" id="IPR002582">
    <property type="entry name" value="ACPS"/>
</dbReference>
<dbReference type="InterPro" id="IPR004568">
    <property type="entry name" value="Ppantetheine-prot_Trfase_dom"/>
</dbReference>
<dbReference type="NCBIfam" id="TIGR00516">
    <property type="entry name" value="acpS"/>
    <property type="match status" value="1"/>
</dbReference>
<dbReference type="NCBIfam" id="TIGR00556">
    <property type="entry name" value="pantethn_trn"/>
    <property type="match status" value="1"/>
</dbReference>
<dbReference type="NCBIfam" id="NF000832">
    <property type="entry name" value="PRK00070.3-2"/>
    <property type="match status" value="1"/>
</dbReference>
<dbReference type="Pfam" id="PF01648">
    <property type="entry name" value="ACPS"/>
    <property type="match status" value="1"/>
</dbReference>
<dbReference type="SUPFAM" id="SSF56214">
    <property type="entry name" value="4'-phosphopantetheinyl transferase"/>
    <property type="match status" value="1"/>
</dbReference>
<proteinExistence type="inferred from homology"/>
<keyword id="KW-0963">Cytoplasm</keyword>
<keyword id="KW-0275">Fatty acid biosynthesis</keyword>
<keyword id="KW-0276">Fatty acid metabolism</keyword>
<keyword id="KW-0444">Lipid biosynthesis</keyword>
<keyword id="KW-0443">Lipid metabolism</keyword>
<keyword id="KW-0460">Magnesium</keyword>
<keyword id="KW-0479">Metal-binding</keyword>
<keyword id="KW-1185">Reference proteome</keyword>
<keyword id="KW-0808">Transferase</keyword>
<evidence type="ECO:0000255" key="1">
    <source>
        <dbReference type="HAMAP-Rule" id="MF_00101"/>
    </source>
</evidence>
<organism>
    <name type="scientific">Kocuria rhizophila (strain ATCC 9341 / DSM 348 / NBRC 103217 / DC2201)</name>
    <dbReference type="NCBI Taxonomy" id="378753"/>
    <lineage>
        <taxon>Bacteria</taxon>
        <taxon>Bacillati</taxon>
        <taxon>Actinomycetota</taxon>
        <taxon>Actinomycetes</taxon>
        <taxon>Micrococcales</taxon>
        <taxon>Micrococcaceae</taxon>
        <taxon>Kocuria</taxon>
    </lineage>
</organism>
<feature type="chain" id="PRO_1000093885" description="Holo-[acyl-carrier-protein] synthase">
    <location>
        <begin position="1"/>
        <end position="123"/>
    </location>
</feature>
<feature type="binding site" evidence="1">
    <location>
        <position position="8"/>
    </location>
    <ligand>
        <name>Mg(2+)</name>
        <dbReference type="ChEBI" id="CHEBI:18420"/>
    </ligand>
</feature>
<feature type="binding site" evidence="1">
    <location>
        <position position="50"/>
    </location>
    <ligand>
        <name>Mg(2+)</name>
        <dbReference type="ChEBI" id="CHEBI:18420"/>
    </ligand>
</feature>
<name>ACPS_KOCRD</name>
<comment type="function">
    <text evidence="1">Transfers the 4'-phosphopantetheine moiety from coenzyme A to a Ser of acyl-carrier-protein.</text>
</comment>
<comment type="catalytic activity">
    <reaction evidence="1">
        <text>apo-[ACP] + CoA = holo-[ACP] + adenosine 3',5'-bisphosphate + H(+)</text>
        <dbReference type="Rhea" id="RHEA:12068"/>
        <dbReference type="Rhea" id="RHEA-COMP:9685"/>
        <dbReference type="Rhea" id="RHEA-COMP:9690"/>
        <dbReference type="ChEBI" id="CHEBI:15378"/>
        <dbReference type="ChEBI" id="CHEBI:29999"/>
        <dbReference type="ChEBI" id="CHEBI:57287"/>
        <dbReference type="ChEBI" id="CHEBI:58343"/>
        <dbReference type="ChEBI" id="CHEBI:64479"/>
        <dbReference type="EC" id="2.7.8.7"/>
    </reaction>
</comment>
<comment type="cofactor">
    <cofactor evidence="1">
        <name>Mg(2+)</name>
        <dbReference type="ChEBI" id="CHEBI:18420"/>
    </cofactor>
</comment>
<comment type="subcellular location">
    <subcellularLocation>
        <location evidence="1">Cytoplasm</location>
    </subcellularLocation>
</comment>
<comment type="similarity">
    <text evidence="1">Belongs to the P-Pant transferase superfamily. AcpS family.</text>
</comment>
<accession>B2GJ30</accession>